<feature type="chain" id="PRO_1000060891" description="Large ribosomal subunit protein bL35">
    <location>
        <begin position="1"/>
        <end position="65"/>
    </location>
</feature>
<proteinExistence type="inferred from homology"/>
<protein>
    <recommendedName>
        <fullName evidence="1">Large ribosomal subunit protein bL35</fullName>
    </recommendedName>
    <alternativeName>
        <fullName evidence="2">50S ribosomal protein L35</fullName>
    </alternativeName>
</protein>
<organism>
    <name type="scientific">Enterobacter sp. (strain 638)</name>
    <dbReference type="NCBI Taxonomy" id="399742"/>
    <lineage>
        <taxon>Bacteria</taxon>
        <taxon>Pseudomonadati</taxon>
        <taxon>Pseudomonadota</taxon>
        <taxon>Gammaproteobacteria</taxon>
        <taxon>Enterobacterales</taxon>
        <taxon>Enterobacteriaceae</taxon>
        <taxon>Enterobacter</taxon>
    </lineage>
</organism>
<dbReference type="EMBL" id="CP000653">
    <property type="protein sequence ID" value="ABP60405.1"/>
    <property type="molecule type" value="Genomic_DNA"/>
</dbReference>
<dbReference type="RefSeq" id="WP_012017121.1">
    <property type="nucleotide sequence ID" value="NC_009436.1"/>
</dbReference>
<dbReference type="SMR" id="A4W9M5"/>
<dbReference type="STRING" id="399742.Ent638_1726"/>
<dbReference type="GeneID" id="93308820"/>
<dbReference type="KEGG" id="ent:Ent638_1726"/>
<dbReference type="eggNOG" id="COG0291">
    <property type="taxonomic scope" value="Bacteria"/>
</dbReference>
<dbReference type="HOGENOM" id="CLU_169643_1_1_6"/>
<dbReference type="OrthoDB" id="47476at2"/>
<dbReference type="Proteomes" id="UP000000230">
    <property type="component" value="Chromosome"/>
</dbReference>
<dbReference type="GO" id="GO:0022625">
    <property type="term" value="C:cytosolic large ribosomal subunit"/>
    <property type="evidence" value="ECO:0007669"/>
    <property type="project" value="TreeGrafter"/>
</dbReference>
<dbReference type="GO" id="GO:0003735">
    <property type="term" value="F:structural constituent of ribosome"/>
    <property type="evidence" value="ECO:0007669"/>
    <property type="project" value="InterPro"/>
</dbReference>
<dbReference type="GO" id="GO:0006412">
    <property type="term" value="P:translation"/>
    <property type="evidence" value="ECO:0007669"/>
    <property type="project" value="UniProtKB-UniRule"/>
</dbReference>
<dbReference type="FunFam" id="4.10.410.60:FF:000001">
    <property type="entry name" value="50S ribosomal protein L35"/>
    <property type="match status" value="1"/>
</dbReference>
<dbReference type="Gene3D" id="4.10.410.60">
    <property type="match status" value="1"/>
</dbReference>
<dbReference type="HAMAP" id="MF_00514">
    <property type="entry name" value="Ribosomal_bL35"/>
    <property type="match status" value="1"/>
</dbReference>
<dbReference type="InterPro" id="IPR001706">
    <property type="entry name" value="Ribosomal_bL35"/>
</dbReference>
<dbReference type="InterPro" id="IPR021137">
    <property type="entry name" value="Ribosomal_bL35-like"/>
</dbReference>
<dbReference type="InterPro" id="IPR018265">
    <property type="entry name" value="Ribosomal_bL35_CS"/>
</dbReference>
<dbReference type="InterPro" id="IPR037229">
    <property type="entry name" value="Ribosomal_bL35_sf"/>
</dbReference>
<dbReference type="NCBIfam" id="TIGR00001">
    <property type="entry name" value="rpmI_bact"/>
    <property type="match status" value="1"/>
</dbReference>
<dbReference type="PANTHER" id="PTHR33343">
    <property type="entry name" value="54S RIBOSOMAL PROTEIN BL35M"/>
    <property type="match status" value="1"/>
</dbReference>
<dbReference type="PANTHER" id="PTHR33343:SF1">
    <property type="entry name" value="LARGE RIBOSOMAL SUBUNIT PROTEIN BL35M"/>
    <property type="match status" value="1"/>
</dbReference>
<dbReference type="Pfam" id="PF01632">
    <property type="entry name" value="Ribosomal_L35p"/>
    <property type="match status" value="1"/>
</dbReference>
<dbReference type="PRINTS" id="PR00064">
    <property type="entry name" value="RIBOSOMALL35"/>
</dbReference>
<dbReference type="SUPFAM" id="SSF143034">
    <property type="entry name" value="L35p-like"/>
    <property type="match status" value="1"/>
</dbReference>
<dbReference type="PROSITE" id="PS00936">
    <property type="entry name" value="RIBOSOMAL_L35"/>
    <property type="match status" value="1"/>
</dbReference>
<evidence type="ECO:0000255" key="1">
    <source>
        <dbReference type="HAMAP-Rule" id="MF_00514"/>
    </source>
</evidence>
<evidence type="ECO:0000305" key="2"/>
<name>RL35_ENT38</name>
<gene>
    <name evidence="1" type="primary">rpmI</name>
    <name type="ordered locus">Ent638_1726</name>
</gene>
<comment type="similarity">
    <text evidence="1">Belongs to the bacterial ribosomal protein bL35 family.</text>
</comment>
<accession>A4W9M5</accession>
<reference key="1">
    <citation type="journal article" date="2010" name="PLoS Genet.">
        <title>Genome sequence of the plant growth promoting endophytic bacterium Enterobacter sp. 638.</title>
        <authorList>
            <person name="Taghavi S."/>
            <person name="van der Lelie D."/>
            <person name="Hoffman A."/>
            <person name="Zhang Y.B."/>
            <person name="Walla M.D."/>
            <person name="Vangronsveld J."/>
            <person name="Newman L."/>
            <person name="Monchy S."/>
        </authorList>
    </citation>
    <scope>NUCLEOTIDE SEQUENCE [LARGE SCALE GENOMIC DNA]</scope>
    <source>
        <strain>638</strain>
    </source>
</reference>
<sequence length="65" mass="7308">MPKIKTVRGAAKRFKKTGKGGFKHKRANLRHILTKKATKRKRHLRPKAMVSKGDLGLVIACLPYA</sequence>
<keyword id="KW-0687">Ribonucleoprotein</keyword>
<keyword id="KW-0689">Ribosomal protein</keyword>